<dbReference type="EMBL" id="AE015929">
    <property type="protein sequence ID" value="AAO03897.1"/>
    <property type="molecule type" value="Genomic_DNA"/>
</dbReference>
<dbReference type="RefSeq" id="NP_763855.1">
    <property type="nucleotide sequence ID" value="NC_004461.1"/>
</dbReference>
<dbReference type="RefSeq" id="WP_001832298.1">
    <property type="nucleotide sequence ID" value="NZ_WBME01000014.1"/>
</dbReference>
<dbReference type="SMR" id="Q8CTT5"/>
<dbReference type="GeneID" id="93781685"/>
<dbReference type="KEGG" id="sep:SE_0300"/>
<dbReference type="PATRIC" id="fig|176280.10.peg.276"/>
<dbReference type="eggNOG" id="COG0080">
    <property type="taxonomic scope" value="Bacteria"/>
</dbReference>
<dbReference type="HOGENOM" id="CLU_074237_2_1_9"/>
<dbReference type="OrthoDB" id="9802408at2"/>
<dbReference type="PRO" id="PR:Q8CTT5"/>
<dbReference type="Proteomes" id="UP000001411">
    <property type="component" value="Chromosome"/>
</dbReference>
<dbReference type="GO" id="GO:0022625">
    <property type="term" value="C:cytosolic large ribosomal subunit"/>
    <property type="evidence" value="ECO:0007669"/>
    <property type="project" value="TreeGrafter"/>
</dbReference>
<dbReference type="GO" id="GO:0070180">
    <property type="term" value="F:large ribosomal subunit rRNA binding"/>
    <property type="evidence" value="ECO:0007669"/>
    <property type="project" value="UniProtKB-UniRule"/>
</dbReference>
<dbReference type="GO" id="GO:0003735">
    <property type="term" value="F:structural constituent of ribosome"/>
    <property type="evidence" value="ECO:0007669"/>
    <property type="project" value="InterPro"/>
</dbReference>
<dbReference type="GO" id="GO:0006412">
    <property type="term" value="P:translation"/>
    <property type="evidence" value="ECO:0007669"/>
    <property type="project" value="UniProtKB-UniRule"/>
</dbReference>
<dbReference type="CDD" id="cd00349">
    <property type="entry name" value="Ribosomal_L11"/>
    <property type="match status" value="1"/>
</dbReference>
<dbReference type="FunFam" id="1.10.10.250:FF:000001">
    <property type="entry name" value="50S ribosomal protein L11"/>
    <property type="match status" value="1"/>
</dbReference>
<dbReference type="FunFam" id="3.30.1550.10:FF:000001">
    <property type="entry name" value="50S ribosomal protein L11"/>
    <property type="match status" value="1"/>
</dbReference>
<dbReference type="Gene3D" id="1.10.10.250">
    <property type="entry name" value="Ribosomal protein L11, C-terminal domain"/>
    <property type="match status" value="1"/>
</dbReference>
<dbReference type="Gene3D" id="3.30.1550.10">
    <property type="entry name" value="Ribosomal protein L11/L12, N-terminal domain"/>
    <property type="match status" value="1"/>
</dbReference>
<dbReference type="HAMAP" id="MF_00736">
    <property type="entry name" value="Ribosomal_uL11"/>
    <property type="match status" value="1"/>
</dbReference>
<dbReference type="InterPro" id="IPR000911">
    <property type="entry name" value="Ribosomal_uL11"/>
</dbReference>
<dbReference type="InterPro" id="IPR006519">
    <property type="entry name" value="Ribosomal_uL11_bac-typ"/>
</dbReference>
<dbReference type="InterPro" id="IPR020783">
    <property type="entry name" value="Ribosomal_uL11_C"/>
</dbReference>
<dbReference type="InterPro" id="IPR036769">
    <property type="entry name" value="Ribosomal_uL11_C_sf"/>
</dbReference>
<dbReference type="InterPro" id="IPR020784">
    <property type="entry name" value="Ribosomal_uL11_N"/>
</dbReference>
<dbReference type="InterPro" id="IPR036796">
    <property type="entry name" value="Ribosomal_uL11_N_sf"/>
</dbReference>
<dbReference type="NCBIfam" id="TIGR01632">
    <property type="entry name" value="L11_bact"/>
    <property type="match status" value="1"/>
</dbReference>
<dbReference type="PANTHER" id="PTHR11661">
    <property type="entry name" value="60S RIBOSOMAL PROTEIN L12"/>
    <property type="match status" value="1"/>
</dbReference>
<dbReference type="PANTHER" id="PTHR11661:SF1">
    <property type="entry name" value="LARGE RIBOSOMAL SUBUNIT PROTEIN UL11M"/>
    <property type="match status" value="1"/>
</dbReference>
<dbReference type="Pfam" id="PF00298">
    <property type="entry name" value="Ribosomal_L11"/>
    <property type="match status" value="1"/>
</dbReference>
<dbReference type="Pfam" id="PF03946">
    <property type="entry name" value="Ribosomal_L11_N"/>
    <property type="match status" value="1"/>
</dbReference>
<dbReference type="SMART" id="SM00649">
    <property type="entry name" value="RL11"/>
    <property type="match status" value="1"/>
</dbReference>
<dbReference type="SUPFAM" id="SSF54747">
    <property type="entry name" value="Ribosomal L11/L12e N-terminal domain"/>
    <property type="match status" value="1"/>
</dbReference>
<dbReference type="SUPFAM" id="SSF46906">
    <property type="entry name" value="Ribosomal protein L11, C-terminal domain"/>
    <property type="match status" value="1"/>
</dbReference>
<name>RL11_STAES</name>
<reference key="1">
    <citation type="journal article" date="2003" name="Mol. Microbiol.">
        <title>Genome-based analysis of virulence genes in a non-biofilm-forming Staphylococcus epidermidis strain (ATCC 12228).</title>
        <authorList>
            <person name="Zhang Y.-Q."/>
            <person name="Ren S.-X."/>
            <person name="Li H.-L."/>
            <person name="Wang Y.-X."/>
            <person name="Fu G."/>
            <person name="Yang J."/>
            <person name="Qin Z.-Q."/>
            <person name="Miao Y.-G."/>
            <person name="Wang W.-Y."/>
            <person name="Chen R.-S."/>
            <person name="Shen Y."/>
            <person name="Chen Z."/>
            <person name="Yuan Z.-H."/>
            <person name="Zhao G.-P."/>
            <person name="Qu D."/>
            <person name="Danchin A."/>
            <person name="Wen Y.-M."/>
        </authorList>
    </citation>
    <scope>NUCLEOTIDE SEQUENCE [LARGE SCALE GENOMIC DNA]</scope>
    <source>
        <strain>ATCC 12228 / FDA PCI 1200</strain>
    </source>
</reference>
<gene>
    <name evidence="1" type="primary">rplK</name>
    <name type="ordered locus">SE_0300</name>
</gene>
<feature type="chain" id="PRO_0000104368" description="Large ribosomal subunit protein uL11">
    <location>
        <begin position="1"/>
        <end position="140"/>
    </location>
</feature>
<protein>
    <recommendedName>
        <fullName evidence="1">Large ribosomal subunit protein uL11</fullName>
    </recommendedName>
    <alternativeName>
        <fullName evidence="2">50S ribosomal protein L11</fullName>
    </alternativeName>
</protein>
<comment type="function">
    <text evidence="1">Forms part of the ribosomal stalk which helps the ribosome interact with GTP-bound translation factors.</text>
</comment>
<comment type="subunit">
    <text evidence="1">Part of the ribosomal stalk of the 50S ribosomal subunit. Interacts with L10 and the large rRNA to form the base of the stalk. L10 forms an elongated spine to which L12 dimers bind in a sequential fashion forming a multimeric L10(L12)X complex.</text>
</comment>
<comment type="PTM">
    <text evidence="1">One or more lysine residues are methylated.</text>
</comment>
<comment type="similarity">
    <text evidence="1">Belongs to the universal ribosomal protein uL11 family.</text>
</comment>
<proteinExistence type="inferred from homology"/>
<accession>Q8CTT5</accession>
<evidence type="ECO:0000255" key="1">
    <source>
        <dbReference type="HAMAP-Rule" id="MF_00736"/>
    </source>
</evidence>
<evidence type="ECO:0000305" key="2"/>
<keyword id="KW-0488">Methylation</keyword>
<keyword id="KW-0687">Ribonucleoprotein</keyword>
<keyword id="KW-0689">Ribosomal protein</keyword>
<keyword id="KW-0694">RNA-binding</keyword>
<keyword id="KW-0699">rRNA-binding</keyword>
<sequence>MAKKVEKVVKLQIPAGKANPAPPVGPALGQAGVNIMGFCKEFNARTQEQAGLIIPVEISVYEDRSFTFITKTPPAPVLLKKAAGVEKGSGEPNKTKVATVTKDQVREIAQTKMQDLNAADEEAAMRIIEGTARSMGITVQ</sequence>
<organism>
    <name type="scientific">Staphylococcus epidermidis (strain ATCC 12228 / FDA PCI 1200)</name>
    <dbReference type="NCBI Taxonomy" id="176280"/>
    <lineage>
        <taxon>Bacteria</taxon>
        <taxon>Bacillati</taxon>
        <taxon>Bacillota</taxon>
        <taxon>Bacilli</taxon>
        <taxon>Bacillales</taxon>
        <taxon>Staphylococcaceae</taxon>
        <taxon>Staphylococcus</taxon>
    </lineage>
</organism>